<feature type="chain" id="PRO_0000376379" description="NADH-quinone oxidoreductase subunit B">
    <location>
        <begin position="1"/>
        <end position="220"/>
    </location>
</feature>
<feature type="binding site" evidence="1">
    <location>
        <position position="63"/>
    </location>
    <ligand>
        <name>[4Fe-4S] cluster</name>
        <dbReference type="ChEBI" id="CHEBI:49883"/>
    </ligand>
</feature>
<feature type="binding site" evidence="1">
    <location>
        <position position="64"/>
    </location>
    <ligand>
        <name>[4Fe-4S] cluster</name>
        <dbReference type="ChEBI" id="CHEBI:49883"/>
    </ligand>
</feature>
<feature type="binding site" evidence="1">
    <location>
        <position position="129"/>
    </location>
    <ligand>
        <name>[4Fe-4S] cluster</name>
        <dbReference type="ChEBI" id="CHEBI:49883"/>
    </ligand>
</feature>
<feature type="binding site" evidence="1">
    <location>
        <position position="158"/>
    </location>
    <ligand>
        <name>[4Fe-4S] cluster</name>
        <dbReference type="ChEBI" id="CHEBI:49883"/>
    </ligand>
</feature>
<sequence length="220" mass="25056">MDYTLTRIDPNGENDRYPLQKQEIVTDPLEQEVNKNVFMGKLNDMVNWGRKNSIWPYNFGLSCCYVEMVTSFTAVHDVARFGAEVLRASPRQADLMVVAGTCFTKMAPVIQRLYDQMLEPKWVISMGACANSGGMYDIYSVVQGVDKFIPVDVYIPGCPPRPEAYMQALMLLQESIGKERRPLSWVVGDQGVYRANMQSERERKRGERIAVTNLRTPDEI</sequence>
<accession>Q3YZS3</accession>
<organism>
    <name type="scientific">Shigella sonnei (strain Ss046)</name>
    <dbReference type="NCBI Taxonomy" id="300269"/>
    <lineage>
        <taxon>Bacteria</taxon>
        <taxon>Pseudomonadati</taxon>
        <taxon>Pseudomonadota</taxon>
        <taxon>Gammaproteobacteria</taxon>
        <taxon>Enterobacterales</taxon>
        <taxon>Enterobacteriaceae</taxon>
        <taxon>Shigella</taxon>
    </lineage>
</organism>
<evidence type="ECO:0000255" key="1">
    <source>
        <dbReference type="HAMAP-Rule" id="MF_01356"/>
    </source>
</evidence>
<gene>
    <name evidence="1" type="primary">nuoB</name>
    <name type="ordered locus">SSON_2344</name>
</gene>
<name>NUOB_SHISS</name>
<proteinExistence type="inferred from homology"/>
<reference key="1">
    <citation type="journal article" date="2005" name="Nucleic Acids Res.">
        <title>Genome dynamics and diversity of Shigella species, the etiologic agents of bacillary dysentery.</title>
        <authorList>
            <person name="Yang F."/>
            <person name="Yang J."/>
            <person name="Zhang X."/>
            <person name="Chen L."/>
            <person name="Jiang Y."/>
            <person name="Yan Y."/>
            <person name="Tang X."/>
            <person name="Wang J."/>
            <person name="Xiong Z."/>
            <person name="Dong J."/>
            <person name="Xue Y."/>
            <person name="Zhu Y."/>
            <person name="Xu X."/>
            <person name="Sun L."/>
            <person name="Chen S."/>
            <person name="Nie H."/>
            <person name="Peng J."/>
            <person name="Xu J."/>
            <person name="Wang Y."/>
            <person name="Yuan Z."/>
            <person name="Wen Y."/>
            <person name="Yao Z."/>
            <person name="Shen Y."/>
            <person name="Qiang B."/>
            <person name="Hou Y."/>
            <person name="Yu J."/>
            <person name="Jin Q."/>
        </authorList>
    </citation>
    <scope>NUCLEOTIDE SEQUENCE [LARGE SCALE GENOMIC DNA]</scope>
    <source>
        <strain>Ss046</strain>
    </source>
</reference>
<keyword id="KW-0004">4Fe-4S</keyword>
<keyword id="KW-0997">Cell inner membrane</keyword>
<keyword id="KW-1003">Cell membrane</keyword>
<keyword id="KW-0408">Iron</keyword>
<keyword id="KW-0411">Iron-sulfur</keyword>
<keyword id="KW-0472">Membrane</keyword>
<keyword id="KW-0479">Metal-binding</keyword>
<keyword id="KW-0520">NAD</keyword>
<keyword id="KW-0874">Quinone</keyword>
<keyword id="KW-1185">Reference proteome</keyword>
<keyword id="KW-1278">Translocase</keyword>
<keyword id="KW-0813">Transport</keyword>
<keyword id="KW-0830">Ubiquinone</keyword>
<comment type="function">
    <text evidence="1">NDH-1 shuttles electrons from NADH, via FMN and iron-sulfur (Fe-S) centers, to quinones in the respiratory chain. The immediate electron acceptor for the enzyme in this species is believed to be ubiquinone. Couples the redox reaction to proton translocation (for every two electrons transferred, four hydrogen ions are translocated across the cytoplasmic membrane), and thus conserves the redox energy in a proton gradient.</text>
</comment>
<comment type="catalytic activity">
    <reaction evidence="1">
        <text>a quinone + NADH + 5 H(+)(in) = a quinol + NAD(+) + 4 H(+)(out)</text>
        <dbReference type="Rhea" id="RHEA:57888"/>
        <dbReference type="ChEBI" id="CHEBI:15378"/>
        <dbReference type="ChEBI" id="CHEBI:24646"/>
        <dbReference type="ChEBI" id="CHEBI:57540"/>
        <dbReference type="ChEBI" id="CHEBI:57945"/>
        <dbReference type="ChEBI" id="CHEBI:132124"/>
    </reaction>
</comment>
<comment type="cofactor">
    <cofactor evidence="1">
        <name>[4Fe-4S] cluster</name>
        <dbReference type="ChEBI" id="CHEBI:49883"/>
    </cofactor>
    <text evidence="1">Binds 1 [4Fe-4S] cluster.</text>
</comment>
<comment type="subunit">
    <text evidence="1">NDH-1 is composed of 13 different subunits. Subunits NuoB, CD, E, F, and G constitute the peripheral sector of the complex.</text>
</comment>
<comment type="subcellular location">
    <subcellularLocation>
        <location evidence="1">Cell inner membrane</location>
        <topology evidence="1">Peripheral membrane protein</topology>
        <orientation evidence="1">Cytoplasmic side</orientation>
    </subcellularLocation>
</comment>
<comment type="similarity">
    <text evidence="1">Belongs to the complex I 20 kDa subunit family.</text>
</comment>
<dbReference type="EC" id="7.1.1.-" evidence="1"/>
<dbReference type="EMBL" id="CP000038">
    <property type="protein sequence ID" value="AAZ88989.1"/>
    <property type="molecule type" value="Genomic_DNA"/>
</dbReference>
<dbReference type="RefSeq" id="WP_000386733.1">
    <property type="nucleotide sequence ID" value="NC_007384.1"/>
</dbReference>
<dbReference type="SMR" id="Q3YZS3"/>
<dbReference type="GeneID" id="93774887"/>
<dbReference type="KEGG" id="ssn:SSON_2344"/>
<dbReference type="HOGENOM" id="CLU_055737_7_3_6"/>
<dbReference type="Proteomes" id="UP000002529">
    <property type="component" value="Chromosome"/>
</dbReference>
<dbReference type="GO" id="GO:0005886">
    <property type="term" value="C:plasma membrane"/>
    <property type="evidence" value="ECO:0007669"/>
    <property type="project" value="UniProtKB-SubCell"/>
</dbReference>
<dbReference type="GO" id="GO:0045271">
    <property type="term" value="C:respiratory chain complex I"/>
    <property type="evidence" value="ECO:0007669"/>
    <property type="project" value="TreeGrafter"/>
</dbReference>
<dbReference type="GO" id="GO:0051539">
    <property type="term" value="F:4 iron, 4 sulfur cluster binding"/>
    <property type="evidence" value="ECO:0007669"/>
    <property type="project" value="UniProtKB-KW"/>
</dbReference>
<dbReference type="GO" id="GO:0005506">
    <property type="term" value="F:iron ion binding"/>
    <property type="evidence" value="ECO:0007669"/>
    <property type="project" value="UniProtKB-UniRule"/>
</dbReference>
<dbReference type="GO" id="GO:0008137">
    <property type="term" value="F:NADH dehydrogenase (ubiquinone) activity"/>
    <property type="evidence" value="ECO:0007669"/>
    <property type="project" value="InterPro"/>
</dbReference>
<dbReference type="GO" id="GO:0050136">
    <property type="term" value="F:NADH:ubiquinone reductase (non-electrogenic) activity"/>
    <property type="evidence" value="ECO:0007669"/>
    <property type="project" value="UniProtKB-UniRule"/>
</dbReference>
<dbReference type="GO" id="GO:0048038">
    <property type="term" value="F:quinone binding"/>
    <property type="evidence" value="ECO:0007669"/>
    <property type="project" value="UniProtKB-KW"/>
</dbReference>
<dbReference type="GO" id="GO:0009060">
    <property type="term" value="P:aerobic respiration"/>
    <property type="evidence" value="ECO:0007669"/>
    <property type="project" value="TreeGrafter"/>
</dbReference>
<dbReference type="GO" id="GO:0015990">
    <property type="term" value="P:electron transport coupled proton transport"/>
    <property type="evidence" value="ECO:0007669"/>
    <property type="project" value="TreeGrafter"/>
</dbReference>
<dbReference type="FunFam" id="3.40.50.12280:FF:000002">
    <property type="entry name" value="NADH-quinone oxidoreductase subunit B"/>
    <property type="match status" value="1"/>
</dbReference>
<dbReference type="Gene3D" id="3.40.50.12280">
    <property type="match status" value="1"/>
</dbReference>
<dbReference type="HAMAP" id="MF_01356">
    <property type="entry name" value="NDH1_NuoB"/>
    <property type="match status" value="1"/>
</dbReference>
<dbReference type="InterPro" id="IPR006137">
    <property type="entry name" value="NADH_UbQ_OxRdtase-like_20kDa"/>
</dbReference>
<dbReference type="InterPro" id="IPR006138">
    <property type="entry name" value="NADH_UQ_OxRdtase_20Kd_su"/>
</dbReference>
<dbReference type="NCBIfam" id="TIGR01957">
    <property type="entry name" value="nuoB_fam"/>
    <property type="match status" value="1"/>
</dbReference>
<dbReference type="NCBIfam" id="NF005012">
    <property type="entry name" value="PRK06411.1"/>
    <property type="match status" value="1"/>
</dbReference>
<dbReference type="PANTHER" id="PTHR11995">
    <property type="entry name" value="NADH DEHYDROGENASE"/>
    <property type="match status" value="1"/>
</dbReference>
<dbReference type="PANTHER" id="PTHR11995:SF14">
    <property type="entry name" value="NADH DEHYDROGENASE [UBIQUINONE] IRON-SULFUR PROTEIN 7, MITOCHONDRIAL"/>
    <property type="match status" value="1"/>
</dbReference>
<dbReference type="Pfam" id="PF01058">
    <property type="entry name" value="Oxidored_q6"/>
    <property type="match status" value="1"/>
</dbReference>
<dbReference type="SUPFAM" id="SSF56770">
    <property type="entry name" value="HydA/Nqo6-like"/>
    <property type="match status" value="1"/>
</dbReference>
<dbReference type="PROSITE" id="PS01150">
    <property type="entry name" value="COMPLEX1_20K"/>
    <property type="match status" value="1"/>
</dbReference>
<protein>
    <recommendedName>
        <fullName evidence="1">NADH-quinone oxidoreductase subunit B</fullName>
        <ecNumber evidence="1">7.1.1.-</ecNumber>
    </recommendedName>
    <alternativeName>
        <fullName evidence="1">NADH dehydrogenase I subunit B</fullName>
    </alternativeName>
    <alternativeName>
        <fullName evidence="1">NDH-1 subunit B</fullName>
    </alternativeName>
</protein>